<dbReference type="EMBL" id="AY596297">
    <property type="protein sequence ID" value="AAV47867.1"/>
    <property type="molecule type" value="Genomic_DNA"/>
</dbReference>
<dbReference type="PDB" id="4PXK">
    <property type="method" value="X-ray"/>
    <property type="resolution" value="2.50 A"/>
    <property type="chains" value="A=1-250"/>
</dbReference>
<dbReference type="PDB" id="7DOH">
    <property type="method" value="X-ray"/>
    <property type="resolution" value="1.45 A"/>
    <property type="chains" value="I=242-250"/>
</dbReference>
<dbReference type="PDB" id="8Y9Z">
    <property type="method" value="EM"/>
    <property type="resolution" value="3.41 A"/>
    <property type="chains" value="B=1-99"/>
</dbReference>
<dbReference type="PDBsum" id="4PXK"/>
<dbReference type="PDBsum" id="7DOH"/>
<dbReference type="PDBsum" id="8Y9Z"/>
<dbReference type="EMDB" id="EMD-39086"/>
<dbReference type="SMR" id="Q5UXY6"/>
<dbReference type="STRING" id="272569.rrnAC3161"/>
<dbReference type="TCDB" id="3.E.1.1.5">
    <property type="family name" value="the ion-translocating microbial rhodopsin (mr) family"/>
</dbReference>
<dbReference type="PaxDb" id="272569-rrnAC3161"/>
<dbReference type="EnsemblBacteria" id="AAV47867">
    <property type="protein sequence ID" value="AAV47867"/>
    <property type="gene ID" value="rrnAC3161"/>
</dbReference>
<dbReference type="KEGG" id="hma:rrnAC3161"/>
<dbReference type="PATRIC" id="fig|272569.17.peg.3701"/>
<dbReference type="eggNOG" id="arCOG02812">
    <property type="taxonomic scope" value="Archaea"/>
</dbReference>
<dbReference type="HOGENOM" id="CLU_054785_5_1_2"/>
<dbReference type="EvolutionaryTrace" id="Q5UXY6"/>
<dbReference type="Proteomes" id="UP000001169">
    <property type="component" value="Chromosome I"/>
</dbReference>
<dbReference type="GO" id="GO:0016020">
    <property type="term" value="C:membrane"/>
    <property type="evidence" value="ECO:0007669"/>
    <property type="project" value="UniProtKB-SubCell"/>
</dbReference>
<dbReference type="GO" id="GO:0005216">
    <property type="term" value="F:monoatomic ion channel activity"/>
    <property type="evidence" value="ECO:0007669"/>
    <property type="project" value="InterPro"/>
</dbReference>
<dbReference type="GO" id="GO:0009881">
    <property type="term" value="F:photoreceptor activity"/>
    <property type="evidence" value="ECO:0007669"/>
    <property type="project" value="UniProtKB-KW"/>
</dbReference>
<dbReference type="GO" id="GO:0007602">
    <property type="term" value="P:phototransduction"/>
    <property type="evidence" value="ECO:0007669"/>
    <property type="project" value="UniProtKB-KW"/>
</dbReference>
<dbReference type="GO" id="GO:1902600">
    <property type="term" value="P:proton transmembrane transport"/>
    <property type="evidence" value="ECO:0007669"/>
    <property type="project" value="UniProtKB-KW"/>
</dbReference>
<dbReference type="CDD" id="cd15244">
    <property type="entry name" value="7tm_bacteriorhodopsin"/>
    <property type="match status" value="1"/>
</dbReference>
<dbReference type="Gene3D" id="1.20.1070.10">
    <property type="entry name" value="Rhodopsin 7-helix transmembrane proteins"/>
    <property type="match status" value="1"/>
</dbReference>
<dbReference type="InterPro" id="IPR001425">
    <property type="entry name" value="Arc/bac/fun_rhodopsins"/>
</dbReference>
<dbReference type="InterPro" id="IPR018229">
    <property type="entry name" value="Rhodopsin_retinal_BS"/>
</dbReference>
<dbReference type="PANTHER" id="PTHR28286">
    <property type="match status" value="1"/>
</dbReference>
<dbReference type="PANTHER" id="PTHR28286:SF2">
    <property type="entry name" value="BACTERIORHODOPSIN _OPSIN, NOPA (EUROFUNG)"/>
    <property type="match status" value="1"/>
</dbReference>
<dbReference type="Pfam" id="PF01036">
    <property type="entry name" value="Bac_rhodopsin"/>
    <property type="match status" value="1"/>
</dbReference>
<dbReference type="PRINTS" id="PR00251">
    <property type="entry name" value="BACTRLOPSIN"/>
</dbReference>
<dbReference type="SMART" id="SM01021">
    <property type="entry name" value="Bac_rhodopsin"/>
    <property type="match status" value="1"/>
</dbReference>
<dbReference type="SUPFAM" id="SSF81321">
    <property type="entry name" value="Family A G protein-coupled receptor-like"/>
    <property type="match status" value="1"/>
</dbReference>
<dbReference type="PROSITE" id="PS00950">
    <property type="entry name" value="BACTERIAL_OPSIN_1"/>
    <property type="match status" value="1"/>
</dbReference>
<dbReference type="PROSITE" id="PS00327">
    <property type="entry name" value="BACTERIAL_OPSIN_RET"/>
    <property type="match status" value="1"/>
</dbReference>
<sequence>MPAPGSEGIWLWLGTAGMFLGMLYFIARGWGETDGRRQKFYIATILITAIAFVNYLAMALGFGLTFIEFGGEQHPIYWARYTDWLFTTPLLLYDLGLLAGADRNTIYSLVSLDVLMIGTGVVATLSAGSGVLSAGAERLVWWGISTAFLLVLLYFLFSSLSGRVANLPSDTRSTFKTLRNLVTVVWLVYPVWWLVGSEGLGLVGIGIETAGFMVIDLVAKVGFGIILLRSHGVLDGAAETTGTGATPADD</sequence>
<proteinExistence type="evidence at protein level"/>
<evidence type="ECO:0000250" key="1"/>
<evidence type="ECO:0000255" key="2"/>
<evidence type="ECO:0000269" key="3">
    <source>
    </source>
</evidence>
<evidence type="ECO:0000305" key="4"/>
<evidence type="ECO:0007829" key="5">
    <source>
        <dbReference type="PDB" id="4PXK"/>
    </source>
</evidence>
<evidence type="ECO:0007829" key="6">
    <source>
        <dbReference type="PDB" id="7DOH"/>
    </source>
</evidence>
<gene>
    <name type="primary">bop</name>
    <name type="ordered locus">rrnAC3161</name>
</gene>
<protein>
    <recommendedName>
        <fullName>Bacteriorhodopsin-I</fullName>
        <shortName>HmBRI</shortName>
    </recommendedName>
</protein>
<organism>
    <name type="scientific">Haloarcula marismortui (strain ATCC 43049 / DSM 3752 / JCM 8966 / VKM B-1809)</name>
    <name type="common">Halobacterium marismortui</name>
    <dbReference type="NCBI Taxonomy" id="272569"/>
    <lineage>
        <taxon>Archaea</taxon>
        <taxon>Methanobacteriati</taxon>
        <taxon>Methanobacteriota</taxon>
        <taxon>Stenosarchaea group</taxon>
        <taxon>Halobacteria</taxon>
        <taxon>Halobacteriales</taxon>
        <taxon>Haloarculaceae</taxon>
        <taxon>Haloarcula</taxon>
    </lineage>
</organism>
<feature type="chain" id="PRO_0000428849" description="Bacteriorhodopsin-I">
    <location>
        <begin position="1"/>
        <end position="250"/>
    </location>
</feature>
<feature type="transmembrane region" description="Helical" evidence="2">
    <location>
        <begin position="7"/>
        <end position="27"/>
    </location>
</feature>
<feature type="transmembrane region" description="Helical" evidence="2">
    <location>
        <begin position="42"/>
        <end position="62"/>
    </location>
</feature>
<feature type="transmembrane region" description="Helical" evidence="2">
    <location>
        <begin position="81"/>
        <end position="101"/>
    </location>
</feature>
<feature type="transmembrane region" description="Helical" evidence="2">
    <location>
        <begin position="114"/>
        <end position="134"/>
    </location>
</feature>
<feature type="transmembrane region" description="Helical" evidence="2">
    <location>
        <begin position="139"/>
        <end position="159"/>
    </location>
</feature>
<feature type="transmembrane region" description="Helical" evidence="2">
    <location>
        <begin position="185"/>
        <end position="205"/>
    </location>
</feature>
<feature type="transmembrane region" description="Helical" evidence="2">
    <location>
        <begin position="207"/>
        <end position="227"/>
    </location>
</feature>
<feature type="site" description="Primary proton acceptor" evidence="1">
    <location>
        <position position="83"/>
    </location>
</feature>
<feature type="modified residue" description="N6-(retinylidene)lysine" evidence="1">
    <location>
        <position position="220"/>
    </location>
</feature>
<feature type="helix" evidence="5">
    <location>
        <begin position="8"/>
        <end position="29"/>
    </location>
</feature>
<feature type="helix" evidence="5">
    <location>
        <begin position="35"/>
        <end position="59"/>
    </location>
</feature>
<feature type="turn" evidence="5">
    <location>
        <begin position="60"/>
        <end position="63"/>
    </location>
</feature>
<feature type="strand" evidence="5">
    <location>
        <begin position="64"/>
        <end position="69"/>
    </location>
</feature>
<feature type="strand" evidence="5">
    <location>
        <begin position="72"/>
        <end position="77"/>
    </location>
</feature>
<feature type="helix" evidence="5">
    <location>
        <begin position="79"/>
        <end position="98"/>
    </location>
</feature>
<feature type="helix" evidence="5">
    <location>
        <begin position="103"/>
        <end position="125"/>
    </location>
</feature>
<feature type="strand" evidence="5">
    <location>
        <begin position="130"/>
        <end position="132"/>
    </location>
</feature>
<feature type="helix" evidence="5">
    <location>
        <begin position="134"/>
        <end position="158"/>
    </location>
</feature>
<feature type="helix" evidence="5">
    <location>
        <begin position="161"/>
        <end position="165"/>
    </location>
</feature>
<feature type="helix" evidence="5">
    <location>
        <begin position="169"/>
        <end position="195"/>
    </location>
</feature>
<feature type="turn" evidence="5">
    <location>
        <begin position="197"/>
        <end position="200"/>
    </location>
</feature>
<feature type="helix" evidence="5">
    <location>
        <begin position="205"/>
        <end position="227"/>
    </location>
</feature>
<feature type="helix" evidence="5">
    <location>
        <begin position="231"/>
        <end position="235"/>
    </location>
</feature>
<feature type="strand" evidence="6">
    <location>
        <begin position="244"/>
        <end position="246"/>
    </location>
</feature>
<feature type="helix" evidence="6">
    <location>
        <begin position="247"/>
        <end position="249"/>
    </location>
</feature>
<accession>Q5UXY6</accession>
<reference key="1">
    <citation type="journal article" date="2004" name="Genome Res.">
        <title>Genome sequence of Haloarcula marismortui: a halophilic archaeon from the Dead Sea.</title>
        <authorList>
            <person name="Baliga N.S."/>
            <person name="Bonneau R."/>
            <person name="Facciotti M.T."/>
            <person name="Pan M."/>
            <person name="Glusman G."/>
            <person name="Deutsch E.W."/>
            <person name="Shannon P."/>
            <person name="Chiu Y."/>
            <person name="Weng R.S."/>
            <person name="Gan R.R."/>
            <person name="Hung P."/>
            <person name="Date S.V."/>
            <person name="Marcotte E."/>
            <person name="Hood L."/>
            <person name="Ng W.V."/>
        </authorList>
    </citation>
    <scope>NUCLEOTIDE SEQUENCE [LARGE SCALE GENOMIC DNA]</scope>
    <source>
        <strain>ATCC 43049 / DSM 3752 / JCM 8966 / VKM B-1809</strain>
    </source>
</reference>
<reference key="2">
    <citation type="journal article" date="2010" name="J. Bacteriol.">
        <title>A novel six-rhodopsin system in a single archaeon.</title>
        <authorList>
            <person name="Fu H.Y."/>
            <person name="Lin Y.C."/>
            <person name="Chang Y.N."/>
            <person name="Tseng H."/>
            <person name="Huang C.C."/>
            <person name="Liu K.C."/>
            <person name="Huang C.S."/>
            <person name="Su C.W."/>
            <person name="Weng R.R."/>
            <person name="Lee Y.Y."/>
            <person name="Ng W.V."/>
            <person name="Yang C.S."/>
        </authorList>
    </citation>
    <scope>FUNCTION</scope>
    <scope>INDUCTION</scope>
    <scope>CHARACTERIZATION</scope>
    <scope>BIOPHYSICOCHEMICAL PROPERTIES</scope>
</reference>
<name>BACR1_HALMA</name>
<comment type="function">
    <text evidence="3">Light-driven proton pump.</text>
</comment>
<comment type="biophysicochemical properties">
    <absorption>
        <max evidence="3">552 nm</max>
        <text>10 nm blue-shift for lambda max in pH=9.0.</text>
    </absorption>
</comment>
<comment type="subcellular location">
    <subcellularLocation>
        <location evidence="4">Membrane</location>
        <topology evidence="4">Multi-pass membrane protein</topology>
    </subcellularLocation>
</comment>
<comment type="induction">
    <text evidence="3">Expressed constitutively throughout the growth phases, both in presence and absence of white light.</text>
</comment>
<comment type="PTM">
    <text evidence="1">The covalent binding of retinal to the apoprotein, bacterioopsin, generates bacteriorhodopsin.</text>
</comment>
<comment type="similarity">
    <text evidence="4">Belongs to the archaeal/bacterial/fungal opsin family.</text>
</comment>
<keyword id="KW-0002">3D-structure</keyword>
<keyword id="KW-0157">Chromophore</keyword>
<keyword id="KW-0375">Hydrogen ion transport</keyword>
<keyword id="KW-0406">Ion transport</keyword>
<keyword id="KW-0472">Membrane</keyword>
<keyword id="KW-0600">Photoreceptor protein</keyword>
<keyword id="KW-0675">Receptor</keyword>
<keyword id="KW-1185">Reference proteome</keyword>
<keyword id="KW-0681">Retinal protein</keyword>
<keyword id="KW-0716">Sensory transduction</keyword>
<keyword id="KW-0812">Transmembrane</keyword>
<keyword id="KW-1133">Transmembrane helix</keyword>
<keyword id="KW-0813">Transport</keyword>